<accession>P56731</accession>
<accession>Q9XNM7</accession>
<protein>
    <recommendedName>
        <fullName>Cytochrome b</fullName>
    </recommendedName>
    <alternativeName>
        <fullName>Complex III subunit 3</fullName>
    </alternativeName>
    <alternativeName>
        <fullName>Complex III subunit III</fullName>
    </alternativeName>
    <alternativeName>
        <fullName>Cytochrome b-c1 complex subunit 3</fullName>
    </alternativeName>
    <alternativeName>
        <fullName>Ubiquinol-cytochrome-c reductase complex cytochrome b subunit</fullName>
    </alternativeName>
</protein>
<sequence length="380" mass="42883">MTIIRKKHPLIKMINHSFIDLPTPSNISSWWNFGSLLGLCLMIQILTGLFLAMHYTSDTTTAFSSVAHICRDVNYGWLIRYMHANGASMFFICLFLHVGRGVYYGSYNMIETWNMGIILLFAVMATAFMGYVLPWGQMSFWGATVITNLLSAIHYVGTTLVEWIWGGFSVDTATLTRFFAFHFILPFIITALVLVHLLFLHETGSNNPTGLNSDADKIPFHPYFTVKDFLGVLILLMVFMILTLFFPDILGDPDNYTPANPLNTPPHIKPEWYFLFAYAILRSIPNKLGGVLALILSILILALMPLLHTSKQRALIFRPITQTMYWILVADLLILTWIGGQPVEYPFIIIGQAASIAYFAIIVILMPIAGMIENNILDLD</sequence>
<organism>
    <name type="scientific">Microtus longicaudus</name>
    <name type="common">Long-tailed vole</name>
    <dbReference type="NCBI Taxonomy" id="98314"/>
    <lineage>
        <taxon>Eukaryota</taxon>
        <taxon>Metazoa</taxon>
        <taxon>Chordata</taxon>
        <taxon>Craniata</taxon>
        <taxon>Vertebrata</taxon>
        <taxon>Euteleostomi</taxon>
        <taxon>Mammalia</taxon>
        <taxon>Eutheria</taxon>
        <taxon>Euarchontoglires</taxon>
        <taxon>Glires</taxon>
        <taxon>Rodentia</taxon>
        <taxon>Myomorpha</taxon>
        <taxon>Muroidea</taxon>
        <taxon>Cricetidae</taxon>
        <taxon>Arvicolinae</taxon>
        <taxon>Microtus</taxon>
    </lineage>
</organism>
<keyword id="KW-0249">Electron transport</keyword>
<keyword id="KW-0349">Heme</keyword>
<keyword id="KW-0408">Iron</keyword>
<keyword id="KW-0472">Membrane</keyword>
<keyword id="KW-0479">Metal-binding</keyword>
<keyword id="KW-0496">Mitochondrion</keyword>
<keyword id="KW-0999">Mitochondrion inner membrane</keyword>
<keyword id="KW-0679">Respiratory chain</keyword>
<keyword id="KW-0812">Transmembrane</keyword>
<keyword id="KW-1133">Transmembrane helix</keyword>
<keyword id="KW-0813">Transport</keyword>
<keyword id="KW-0830">Ubiquinone</keyword>
<proteinExistence type="inferred from homology"/>
<dbReference type="EMBL" id="AF119267">
    <property type="protein sequence ID" value="AAD43885.1"/>
    <property type="molecule type" value="Genomic_DNA"/>
</dbReference>
<dbReference type="SMR" id="P56731"/>
<dbReference type="GO" id="GO:0005743">
    <property type="term" value="C:mitochondrial inner membrane"/>
    <property type="evidence" value="ECO:0007669"/>
    <property type="project" value="UniProtKB-SubCell"/>
</dbReference>
<dbReference type="GO" id="GO:0045275">
    <property type="term" value="C:respiratory chain complex III"/>
    <property type="evidence" value="ECO:0007669"/>
    <property type="project" value="InterPro"/>
</dbReference>
<dbReference type="GO" id="GO:0046872">
    <property type="term" value="F:metal ion binding"/>
    <property type="evidence" value="ECO:0007669"/>
    <property type="project" value="UniProtKB-KW"/>
</dbReference>
<dbReference type="GO" id="GO:0008121">
    <property type="term" value="F:ubiquinol-cytochrome-c reductase activity"/>
    <property type="evidence" value="ECO:0007669"/>
    <property type="project" value="InterPro"/>
</dbReference>
<dbReference type="GO" id="GO:0006122">
    <property type="term" value="P:mitochondrial electron transport, ubiquinol to cytochrome c"/>
    <property type="evidence" value="ECO:0007669"/>
    <property type="project" value="TreeGrafter"/>
</dbReference>
<dbReference type="CDD" id="cd00290">
    <property type="entry name" value="cytochrome_b_C"/>
    <property type="match status" value="1"/>
</dbReference>
<dbReference type="CDD" id="cd00284">
    <property type="entry name" value="Cytochrome_b_N"/>
    <property type="match status" value="1"/>
</dbReference>
<dbReference type="FunFam" id="1.20.810.10:FF:000002">
    <property type="entry name" value="Cytochrome b"/>
    <property type="match status" value="1"/>
</dbReference>
<dbReference type="Gene3D" id="1.20.810.10">
    <property type="entry name" value="Cytochrome Bc1 Complex, Chain C"/>
    <property type="match status" value="1"/>
</dbReference>
<dbReference type="InterPro" id="IPR005798">
    <property type="entry name" value="Cyt_b/b6_C"/>
</dbReference>
<dbReference type="InterPro" id="IPR036150">
    <property type="entry name" value="Cyt_b/b6_C_sf"/>
</dbReference>
<dbReference type="InterPro" id="IPR005797">
    <property type="entry name" value="Cyt_b/b6_N"/>
</dbReference>
<dbReference type="InterPro" id="IPR027387">
    <property type="entry name" value="Cytb/b6-like_sf"/>
</dbReference>
<dbReference type="InterPro" id="IPR030689">
    <property type="entry name" value="Cytochrome_b"/>
</dbReference>
<dbReference type="InterPro" id="IPR048260">
    <property type="entry name" value="Cytochrome_b_C_euk/bac"/>
</dbReference>
<dbReference type="InterPro" id="IPR048259">
    <property type="entry name" value="Cytochrome_b_N_euk/bac"/>
</dbReference>
<dbReference type="InterPro" id="IPR016174">
    <property type="entry name" value="Di-haem_cyt_TM"/>
</dbReference>
<dbReference type="PANTHER" id="PTHR19271">
    <property type="entry name" value="CYTOCHROME B"/>
    <property type="match status" value="1"/>
</dbReference>
<dbReference type="PANTHER" id="PTHR19271:SF16">
    <property type="entry name" value="CYTOCHROME B"/>
    <property type="match status" value="1"/>
</dbReference>
<dbReference type="Pfam" id="PF00032">
    <property type="entry name" value="Cytochrom_B_C"/>
    <property type="match status" value="1"/>
</dbReference>
<dbReference type="Pfam" id="PF00033">
    <property type="entry name" value="Cytochrome_B"/>
    <property type="match status" value="1"/>
</dbReference>
<dbReference type="PIRSF" id="PIRSF038885">
    <property type="entry name" value="COB"/>
    <property type="match status" value="1"/>
</dbReference>
<dbReference type="SUPFAM" id="SSF81648">
    <property type="entry name" value="a domain/subunit of cytochrome bc1 complex (Ubiquinol-cytochrome c reductase)"/>
    <property type="match status" value="1"/>
</dbReference>
<dbReference type="SUPFAM" id="SSF81342">
    <property type="entry name" value="Transmembrane di-heme cytochromes"/>
    <property type="match status" value="1"/>
</dbReference>
<dbReference type="PROSITE" id="PS51003">
    <property type="entry name" value="CYTB_CTER"/>
    <property type="match status" value="1"/>
</dbReference>
<dbReference type="PROSITE" id="PS51002">
    <property type="entry name" value="CYTB_NTER"/>
    <property type="match status" value="1"/>
</dbReference>
<feature type="chain" id="PRO_0000061183" description="Cytochrome b">
    <location>
        <begin position="1"/>
        <end position="380"/>
    </location>
</feature>
<feature type="transmembrane region" description="Helical" evidence="2">
    <location>
        <begin position="33"/>
        <end position="53"/>
    </location>
</feature>
<feature type="transmembrane region" description="Helical" evidence="2">
    <location>
        <begin position="77"/>
        <end position="98"/>
    </location>
</feature>
<feature type="transmembrane region" description="Helical" evidence="2">
    <location>
        <begin position="113"/>
        <end position="133"/>
    </location>
</feature>
<feature type="transmembrane region" description="Helical" evidence="2">
    <location>
        <begin position="178"/>
        <end position="198"/>
    </location>
</feature>
<feature type="transmembrane region" description="Helical" evidence="2">
    <location>
        <begin position="226"/>
        <end position="246"/>
    </location>
</feature>
<feature type="transmembrane region" description="Helical" evidence="2">
    <location>
        <begin position="288"/>
        <end position="308"/>
    </location>
</feature>
<feature type="transmembrane region" description="Helical" evidence="2">
    <location>
        <begin position="320"/>
        <end position="340"/>
    </location>
</feature>
<feature type="transmembrane region" description="Helical" evidence="2">
    <location>
        <begin position="347"/>
        <end position="367"/>
    </location>
</feature>
<feature type="binding site" description="axial binding residue" evidence="2">
    <location>
        <position position="83"/>
    </location>
    <ligand>
        <name>heme b</name>
        <dbReference type="ChEBI" id="CHEBI:60344"/>
        <label>b562</label>
    </ligand>
    <ligandPart>
        <name>Fe</name>
        <dbReference type="ChEBI" id="CHEBI:18248"/>
    </ligandPart>
</feature>
<feature type="binding site" description="axial binding residue" evidence="2">
    <location>
        <position position="97"/>
    </location>
    <ligand>
        <name>heme b</name>
        <dbReference type="ChEBI" id="CHEBI:60344"/>
        <label>b566</label>
    </ligand>
    <ligandPart>
        <name>Fe</name>
        <dbReference type="ChEBI" id="CHEBI:18248"/>
    </ligandPart>
</feature>
<feature type="binding site" description="axial binding residue" evidence="2">
    <location>
        <position position="182"/>
    </location>
    <ligand>
        <name>heme b</name>
        <dbReference type="ChEBI" id="CHEBI:60344"/>
        <label>b562</label>
    </ligand>
    <ligandPart>
        <name>Fe</name>
        <dbReference type="ChEBI" id="CHEBI:18248"/>
    </ligandPart>
</feature>
<feature type="binding site" description="axial binding residue" evidence="2">
    <location>
        <position position="196"/>
    </location>
    <ligand>
        <name>heme b</name>
        <dbReference type="ChEBI" id="CHEBI:60344"/>
        <label>b566</label>
    </ligand>
    <ligandPart>
        <name>Fe</name>
        <dbReference type="ChEBI" id="CHEBI:18248"/>
    </ligandPart>
</feature>
<feature type="binding site" evidence="2">
    <location>
        <position position="201"/>
    </location>
    <ligand>
        <name>a ubiquinone</name>
        <dbReference type="ChEBI" id="CHEBI:16389"/>
    </ligand>
</feature>
<evidence type="ECO:0000250" key="1"/>
<evidence type="ECO:0000250" key="2">
    <source>
        <dbReference type="UniProtKB" id="P00157"/>
    </source>
</evidence>
<evidence type="ECO:0000255" key="3">
    <source>
        <dbReference type="PROSITE-ProRule" id="PRU00967"/>
    </source>
</evidence>
<evidence type="ECO:0000255" key="4">
    <source>
        <dbReference type="PROSITE-ProRule" id="PRU00968"/>
    </source>
</evidence>
<comment type="function">
    <text evidence="2">Component of the ubiquinol-cytochrome c reductase complex (complex III or cytochrome b-c1 complex) that is part of the mitochondrial respiratory chain. The b-c1 complex mediates electron transfer from ubiquinol to cytochrome c. Contributes to the generation of a proton gradient across the mitochondrial membrane that is then used for ATP synthesis.</text>
</comment>
<comment type="cofactor">
    <cofactor evidence="2">
        <name>heme b</name>
        <dbReference type="ChEBI" id="CHEBI:60344"/>
    </cofactor>
    <text evidence="2">Binds 2 heme b groups non-covalently.</text>
</comment>
<comment type="subunit">
    <text evidence="2">The cytochrome bc1 complex contains 11 subunits: 3 respiratory subunits (MT-CYB, CYC1 and UQCRFS1), 2 core proteins (UQCRC1 and UQCRC2) and 6 low-molecular weight proteins (UQCRH/QCR6, UQCRB/QCR7, UQCRQ/QCR8, UQCR10/QCR9, UQCR11/QCR10 and a cleavage product of UQCRFS1). This cytochrome bc1 complex then forms a dimer.</text>
</comment>
<comment type="subcellular location">
    <subcellularLocation>
        <location evidence="2">Mitochondrion inner membrane</location>
        <topology evidence="2">Multi-pass membrane protein</topology>
    </subcellularLocation>
</comment>
<comment type="miscellaneous">
    <text evidence="1">Heme 1 (or BL or b562) is low-potential and absorbs at about 562 nm, and heme 2 (or BH or b566) is high-potential and absorbs at about 566 nm.</text>
</comment>
<comment type="similarity">
    <text evidence="3 4">Belongs to the cytochrome b family.</text>
</comment>
<comment type="caution">
    <text evidence="2">The full-length protein contains only eight transmembrane helices, not nine as predicted by bioinformatics tools.</text>
</comment>
<name>CYB_MICLO</name>
<reference key="1">
    <citation type="journal article" date="1999" name="J. Mammal. Evol.">
        <title>MtDNA evidence for repeated pulses of speciation within arvicoline and murid rodents.</title>
        <authorList>
            <person name="Conroy C.J."/>
            <person name="Cook J.A."/>
        </authorList>
    </citation>
    <scope>NUCLEOTIDE SEQUENCE [GENOMIC DNA]</scope>
</reference>
<geneLocation type="mitochondrion"/>
<gene>
    <name type="primary">MT-CYB</name>
    <name type="synonym">COB</name>
    <name type="synonym">CYTB</name>
    <name type="synonym">MTCYB</name>
</gene>